<keyword id="KW-0025">Alternative splicing</keyword>
<keyword id="KW-0067">ATP-binding</keyword>
<keyword id="KW-0276">Fatty acid metabolism</keyword>
<keyword id="KW-0436">Ligase</keyword>
<keyword id="KW-0443">Lipid metabolism</keyword>
<keyword id="KW-0445">Lipid transport</keyword>
<keyword id="KW-0472">Membrane</keyword>
<keyword id="KW-0496">Mitochondrion</keyword>
<keyword id="KW-0547">Nucleotide-binding</keyword>
<keyword id="KW-1185">Reference proteome</keyword>
<keyword id="KW-0812">Transmembrane</keyword>
<keyword id="KW-1133">Transmembrane helix</keyword>
<keyword id="KW-0813">Transport</keyword>
<accession>O88561</accession>
<accession>Q6PAU1</accession>
<accession>Q8BK70</accession>
<proteinExistence type="evidence at protein level"/>
<evidence type="ECO:0000250" key="1">
    <source>
        <dbReference type="UniProtKB" id="Q5K4L6"/>
    </source>
</evidence>
<evidence type="ECO:0000250" key="2">
    <source>
        <dbReference type="UniProtKB" id="Q9SMT7"/>
    </source>
</evidence>
<evidence type="ECO:0000255" key="3"/>
<evidence type="ECO:0000256" key="4">
    <source>
        <dbReference type="SAM" id="MobiDB-lite"/>
    </source>
</evidence>
<evidence type="ECO:0000269" key="5">
    <source>
    </source>
</evidence>
<evidence type="ECO:0000269" key="6">
    <source>
    </source>
</evidence>
<evidence type="ECO:0000269" key="7">
    <source>
    </source>
</evidence>
<evidence type="ECO:0000303" key="8">
    <source>
    </source>
</evidence>
<evidence type="ECO:0000303" key="9">
    <source>
    </source>
</evidence>
<evidence type="ECO:0000303" key="10">
    <source>
    </source>
</evidence>
<evidence type="ECO:0000303" key="11">
    <source>
    </source>
</evidence>
<evidence type="ECO:0000305" key="12"/>
<evidence type="ECO:0000312" key="13">
    <source>
        <dbReference type="MGI" id="MGI:1347358"/>
    </source>
</evidence>
<organism>
    <name type="scientific">Mus musculus</name>
    <name type="common">Mouse</name>
    <dbReference type="NCBI Taxonomy" id="10090"/>
    <lineage>
        <taxon>Eukaryota</taxon>
        <taxon>Metazoa</taxon>
        <taxon>Chordata</taxon>
        <taxon>Craniata</taxon>
        <taxon>Vertebrata</taxon>
        <taxon>Euteleostomi</taxon>
        <taxon>Mammalia</taxon>
        <taxon>Eutheria</taxon>
        <taxon>Euarchontoglires</taxon>
        <taxon>Glires</taxon>
        <taxon>Rodentia</taxon>
        <taxon>Myomorpha</taxon>
        <taxon>Muroidea</taxon>
        <taxon>Muridae</taxon>
        <taxon>Murinae</taxon>
        <taxon>Mus</taxon>
        <taxon>Mus</taxon>
    </lineage>
</organism>
<dbReference type="EC" id="6.2.1.15" evidence="6"/>
<dbReference type="EC" id="6.2.1.3" evidence="5 6"/>
<dbReference type="EC" id="6.2.1.-" evidence="5 6"/>
<dbReference type="EMBL" id="BC060052">
    <property type="protein sequence ID" value="AAH60052.1"/>
    <property type="status" value="ALT_INIT"/>
    <property type="molecule type" value="mRNA"/>
</dbReference>
<dbReference type="EMBL" id="AK076014">
    <property type="protein sequence ID" value="BAC36120.1"/>
    <property type="status" value="ALT_INIT"/>
    <property type="molecule type" value="mRNA"/>
</dbReference>
<dbReference type="EMBL" id="AF072758">
    <property type="protein sequence ID" value="AAC40187.1"/>
    <property type="molecule type" value="mRNA"/>
</dbReference>
<dbReference type="CCDS" id="CCDS17527.1">
    <molecule id="O88561-1"/>
</dbReference>
<dbReference type="RefSeq" id="NP_001303617.1">
    <property type="nucleotide sequence ID" value="NM_001316688.1"/>
</dbReference>
<dbReference type="RefSeq" id="NP_036118.2">
    <property type="nucleotide sequence ID" value="NM_011988.3"/>
</dbReference>
<dbReference type="SMR" id="O88561"/>
<dbReference type="BioGRID" id="205024">
    <property type="interactions" value="2"/>
</dbReference>
<dbReference type="FunCoup" id="O88561">
    <property type="interactions" value="260"/>
</dbReference>
<dbReference type="STRING" id="10090.ENSMUSP00000029541"/>
<dbReference type="SwissLipids" id="SLP:000001142"/>
<dbReference type="iPTMnet" id="O88561"/>
<dbReference type="PhosphoSitePlus" id="O88561"/>
<dbReference type="jPOST" id="O88561"/>
<dbReference type="PaxDb" id="10090-ENSMUSP00000029541"/>
<dbReference type="PeptideAtlas" id="O88561"/>
<dbReference type="ProteomicsDB" id="256873">
    <molecule id="O88561-1"/>
</dbReference>
<dbReference type="ProteomicsDB" id="256874">
    <molecule id="O88561-2"/>
</dbReference>
<dbReference type="DNASU" id="26568"/>
<dbReference type="GeneID" id="26568"/>
<dbReference type="KEGG" id="mmu:26568"/>
<dbReference type="AGR" id="MGI:1347358"/>
<dbReference type="CTD" id="11000"/>
<dbReference type="MGI" id="MGI:1347358">
    <property type="gene designation" value="Slc27a3"/>
</dbReference>
<dbReference type="eggNOG" id="KOG1179">
    <property type="taxonomic scope" value="Eukaryota"/>
</dbReference>
<dbReference type="InParanoid" id="O88561"/>
<dbReference type="OrthoDB" id="288590at2759"/>
<dbReference type="PhylomeDB" id="O88561"/>
<dbReference type="BRENDA" id="6.2.1.3">
    <property type="organism ID" value="3474"/>
</dbReference>
<dbReference type="BioGRID-ORCS" id="26568">
    <property type="hits" value="1 hit in 78 CRISPR screens"/>
</dbReference>
<dbReference type="PRO" id="PR:O88561"/>
<dbReference type="Proteomes" id="UP000000589">
    <property type="component" value="Unplaced"/>
</dbReference>
<dbReference type="RNAct" id="O88561">
    <property type="molecule type" value="protein"/>
</dbReference>
<dbReference type="GO" id="GO:0005759">
    <property type="term" value="C:mitochondrial matrix"/>
    <property type="evidence" value="ECO:0000304"/>
    <property type="project" value="Reactome"/>
</dbReference>
<dbReference type="GO" id="GO:0031966">
    <property type="term" value="C:mitochondrial membrane"/>
    <property type="evidence" value="ECO:0007669"/>
    <property type="project" value="UniProtKB-SubCell"/>
</dbReference>
<dbReference type="GO" id="GO:0005739">
    <property type="term" value="C:mitochondrion"/>
    <property type="evidence" value="ECO:0000314"/>
    <property type="project" value="MGI"/>
</dbReference>
<dbReference type="GO" id="GO:0047676">
    <property type="term" value="F:arachidonate-CoA ligase activity"/>
    <property type="evidence" value="ECO:0007669"/>
    <property type="project" value="UniProtKB-EC"/>
</dbReference>
<dbReference type="GO" id="GO:0005524">
    <property type="term" value="F:ATP binding"/>
    <property type="evidence" value="ECO:0007669"/>
    <property type="project" value="UniProtKB-KW"/>
</dbReference>
<dbReference type="GO" id="GO:0004321">
    <property type="term" value="F:fatty-acyl-CoA synthase activity"/>
    <property type="evidence" value="ECO:0000315"/>
    <property type="project" value="MGI"/>
</dbReference>
<dbReference type="GO" id="GO:0004467">
    <property type="term" value="F:long-chain fatty acid-CoA ligase activity"/>
    <property type="evidence" value="ECO:0000250"/>
    <property type="project" value="UniProtKB"/>
</dbReference>
<dbReference type="GO" id="GO:0031957">
    <property type="term" value="F:very long-chain fatty acid-CoA ligase activity"/>
    <property type="evidence" value="ECO:0000250"/>
    <property type="project" value="UniProtKB"/>
</dbReference>
<dbReference type="GO" id="GO:0006637">
    <property type="term" value="P:acyl-CoA metabolic process"/>
    <property type="evidence" value="ECO:0000305"/>
    <property type="project" value="MGI"/>
</dbReference>
<dbReference type="GO" id="GO:0006869">
    <property type="term" value="P:lipid transport"/>
    <property type="evidence" value="ECO:0007669"/>
    <property type="project" value="UniProtKB-KW"/>
</dbReference>
<dbReference type="GO" id="GO:0001676">
    <property type="term" value="P:long-chain fatty acid metabolic process"/>
    <property type="evidence" value="ECO:0000250"/>
    <property type="project" value="UniProtKB"/>
</dbReference>
<dbReference type="CDD" id="cd05938">
    <property type="entry name" value="hsFATP2a_ACSVL_like"/>
    <property type="match status" value="1"/>
</dbReference>
<dbReference type="FunFam" id="3.30.300.30:FF:000002">
    <property type="entry name" value="Long-chain fatty acid transport protein 1"/>
    <property type="match status" value="1"/>
</dbReference>
<dbReference type="Gene3D" id="3.30.300.30">
    <property type="match status" value="1"/>
</dbReference>
<dbReference type="Gene3D" id="3.40.50.12780">
    <property type="entry name" value="N-terminal domain of ligase-like"/>
    <property type="match status" value="1"/>
</dbReference>
<dbReference type="InterPro" id="IPR025110">
    <property type="entry name" value="AMP-bd_C"/>
</dbReference>
<dbReference type="InterPro" id="IPR045851">
    <property type="entry name" value="AMP-bd_C_sf"/>
</dbReference>
<dbReference type="InterPro" id="IPR020845">
    <property type="entry name" value="AMP-binding_CS"/>
</dbReference>
<dbReference type="InterPro" id="IPR000873">
    <property type="entry name" value="AMP-dep_synth/lig_dom"/>
</dbReference>
<dbReference type="InterPro" id="IPR042099">
    <property type="entry name" value="ANL_N_sf"/>
</dbReference>
<dbReference type="PANTHER" id="PTHR43107">
    <property type="entry name" value="LONG-CHAIN FATTY ACID TRANSPORT PROTEIN"/>
    <property type="match status" value="1"/>
</dbReference>
<dbReference type="PANTHER" id="PTHR43107:SF12">
    <property type="entry name" value="LONG-CHAIN FATTY ACID TRANSPORT PROTEIN 3"/>
    <property type="match status" value="1"/>
</dbReference>
<dbReference type="Pfam" id="PF00501">
    <property type="entry name" value="AMP-binding"/>
    <property type="match status" value="1"/>
</dbReference>
<dbReference type="Pfam" id="PF13193">
    <property type="entry name" value="AMP-binding_C"/>
    <property type="match status" value="1"/>
</dbReference>
<dbReference type="SUPFAM" id="SSF56801">
    <property type="entry name" value="Acetyl-CoA synthetase-like"/>
    <property type="match status" value="1"/>
</dbReference>
<dbReference type="PROSITE" id="PS00455">
    <property type="entry name" value="AMP_BINDING"/>
    <property type="match status" value="1"/>
</dbReference>
<reference key="1">
    <citation type="journal article" date="2004" name="Genome Res.">
        <title>The status, quality, and expansion of the NIH full-length cDNA project: the Mammalian Gene Collection (MGC).</title>
        <authorList>
            <consortium name="The MGC Project Team"/>
        </authorList>
    </citation>
    <scope>NUCLEOTIDE SEQUENCE [LARGE SCALE MRNA] (ISOFORM 2)</scope>
    <source>
        <strain>C57BL/6J</strain>
        <tissue>Brain</tissue>
    </source>
</reference>
<reference key="2">
    <citation type="journal article" date="2005" name="Science">
        <title>The transcriptional landscape of the mammalian genome.</title>
        <authorList>
            <person name="Carninci P."/>
            <person name="Kasukawa T."/>
            <person name="Katayama S."/>
            <person name="Gough J."/>
            <person name="Frith M.C."/>
            <person name="Maeda N."/>
            <person name="Oyama R."/>
            <person name="Ravasi T."/>
            <person name="Lenhard B."/>
            <person name="Wells C."/>
            <person name="Kodzius R."/>
            <person name="Shimokawa K."/>
            <person name="Bajic V.B."/>
            <person name="Brenner S.E."/>
            <person name="Batalov S."/>
            <person name="Forrest A.R."/>
            <person name="Zavolan M."/>
            <person name="Davis M.J."/>
            <person name="Wilming L.G."/>
            <person name="Aidinis V."/>
            <person name="Allen J.E."/>
            <person name="Ambesi-Impiombato A."/>
            <person name="Apweiler R."/>
            <person name="Aturaliya R.N."/>
            <person name="Bailey T.L."/>
            <person name="Bansal M."/>
            <person name="Baxter L."/>
            <person name="Beisel K.W."/>
            <person name="Bersano T."/>
            <person name="Bono H."/>
            <person name="Chalk A.M."/>
            <person name="Chiu K.P."/>
            <person name="Choudhary V."/>
            <person name="Christoffels A."/>
            <person name="Clutterbuck D.R."/>
            <person name="Crowe M.L."/>
            <person name="Dalla E."/>
            <person name="Dalrymple B.P."/>
            <person name="de Bono B."/>
            <person name="Della Gatta G."/>
            <person name="di Bernardo D."/>
            <person name="Down T."/>
            <person name="Engstrom P."/>
            <person name="Fagiolini M."/>
            <person name="Faulkner G."/>
            <person name="Fletcher C.F."/>
            <person name="Fukushima T."/>
            <person name="Furuno M."/>
            <person name="Futaki S."/>
            <person name="Gariboldi M."/>
            <person name="Georgii-Hemming P."/>
            <person name="Gingeras T.R."/>
            <person name="Gojobori T."/>
            <person name="Green R.E."/>
            <person name="Gustincich S."/>
            <person name="Harbers M."/>
            <person name="Hayashi Y."/>
            <person name="Hensch T.K."/>
            <person name="Hirokawa N."/>
            <person name="Hill D."/>
            <person name="Huminiecki L."/>
            <person name="Iacono M."/>
            <person name="Ikeo K."/>
            <person name="Iwama A."/>
            <person name="Ishikawa T."/>
            <person name="Jakt M."/>
            <person name="Kanapin A."/>
            <person name="Katoh M."/>
            <person name="Kawasawa Y."/>
            <person name="Kelso J."/>
            <person name="Kitamura H."/>
            <person name="Kitano H."/>
            <person name="Kollias G."/>
            <person name="Krishnan S.P."/>
            <person name="Kruger A."/>
            <person name="Kummerfeld S.K."/>
            <person name="Kurochkin I.V."/>
            <person name="Lareau L.F."/>
            <person name="Lazarevic D."/>
            <person name="Lipovich L."/>
            <person name="Liu J."/>
            <person name="Liuni S."/>
            <person name="McWilliam S."/>
            <person name="Madan Babu M."/>
            <person name="Madera M."/>
            <person name="Marchionni L."/>
            <person name="Matsuda H."/>
            <person name="Matsuzawa S."/>
            <person name="Miki H."/>
            <person name="Mignone F."/>
            <person name="Miyake S."/>
            <person name="Morris K."/>
            <person name="Mottagui-Tabar S."/>
            <person name="Mulder N."/>
            <person name="Nakano N."/>
            <person name="Nakauchi H."/>
            <person name="Ng P."/>
            <person name="Nilsson R."/>
            <person name="Nishiguchi S."/>
            <person name="Nishikawa S."/>
            <person name="Nori F."/>
            <person name="Ohara O."/>
            <person name="Okazaki Y."/>
            <person name="Orlando V."/>
            <person name="Pang K.C."/>
            <person name="Pavan W.J."/>
            <person name="Pavesi G."/>
            <person name="Pesole G."/>
            <person name="Petrovsky N."/>
            <person name="Piazza S."/>
            <person name="Reed J."/>
            <person name="Reid J.F."/>
            <person name="Ring B.Z."/>
            <person name="Ringwald M."/>
            <person name="Rost B."/>
            <person name="Ruan Y."/>
            <person name="Salzberg S.L."/>
            <person name="Sandelin A."/>
            <person name="Schneider C."/>
            <person name="Schoenbach C."/>
            <person name="Sekiguchi K."/>
            <person name="Semple C.A."/>
            <person name="Seno S."/>
            <person name="Sessa L."/>
            <person name="Sheng Y."/>
            <person name="Shibata Y."/>
            <person name="Shimada H."/>
            <person name="Shimada K."/>
            <person name="Silva D."/>
            <person name="Sinclair B."/>
            <person name="Sperling S."/>
            <person name="Stupka E."/>
            <person name="Sugiura K."/>
            <person name="Sultana R."/>
            <person name="Takenaka Y."/>
            <person name="Taki K."/>
            <person name="Tammoja K."/>
            <person name="Tan S.L."/>
            <person name="Tang S."/>
            <person name="Taylor M.S."/>
            <person name="Tegner J."/>
            <person name="Teichmann S.A."/>
            <person name="Ueda H.R."/>
            <person name="van Nimwegen E."/>
            <person name="Verardo R."/>
            <person name="Wei C.L."/>
            <person name="Yagi K."/>
            <person name="Yamanishi H."/>
            <person name="Zabarovsky E."/>
            <person name="Zhu S."/>
            <person name="Zimmer A."/>
            <person name="Hide W."/>
            <person name="Bult C."/>
            <person name="Grimmond S.M."/>
            <person name="Teasdale R.D."/>
            <person name="Liu E.T."/>
            <person name="Brusic V."/>
            <person name="Quackenbush J."/>
            <person name="Wahlestedt C."/>
            <person name="Mattick J.S."/>
            <person name="Hume D.A."/>
            <person name="Kai C."/>
            <person name="Sasaki D."/>
            <person name="Tomaru Y."/>
            <person name="Fukuda S."/>
            <person name="Kanamori-Katayama M."/>
            <person name="Suzuki M."/>
            <person name="Aoki J."/>
            <person name="Arakawa T."/>
            <person name="Iida J."/>
            <person name="Imamura K."/>
            <person name="Itoh M."/>
            <person name="Kato T."/>
            <person name="Kawaji H."/>
            <person name="Kawagashira N."/>
            <person name="Kawashima T."/>
            <person name="Kojima M."/>
            <person name="Kondo S."/>
            <person name="Konno H."/>
            <person name="Nakano K."/>
            <person name="Ninomiya N."/>
            <person name="Nishio T."/>
            <person name="Okada M."/>
            <person name="Plessy C."/>
            <person name="Shibata K."/>
            <person name="Shiraki T."/>
            <person name="Suzuki S."/>
            <person name="Tagami M."/>
            <person name="Waki K."/>
            <person name="Watahiki A."/>
            <person name="Okamura-Oho Y."/>
            <person name="Suzuki H."/>
            <person name="Kawai J."/>
            <person name="Hayashizaki Y."/>
        </authorList>
    </citation>
    <scope>NUCLEOTIDE SEQUENCE [LARGE SCALE MRNA] OF 45-667 (ISOFORM 1)</scope>
    <source>
        <strain>C57BL/6J</strain>
    </source>
</reference>
<reference key="3">
    <citation type="journal article" date="1998" name="Proc. Natl. Acad. Sci. U.S.A.">
        <title>A family of fatty acid transporters conserved from mycobacterium to man.</title>
        <authorList>
            <person name="Hirsch D."/>
            <person name="Stahl A."/>
            <person name="Lodish H.F."/>
        </authorList>
    </citation>
    <scope>NUCLEOTIDE SEQUENCE [MRNA] OF 54-667 (ISOFORM 1)</scope>
</reference>
<reference key="4">
    <citation type="journal article" date="2004" name="J. Biol. Chem.">
        <title>Mouse very long-chain acyl-CoA synthetase 3/fatty acid transport protein 3 catalyzes fatty acid activation but not fatty acid transport in MA-10 cells.</title>
        <authorList>
            <person name="Pei Z."/>
            <person name="Fraisl P."/>
            <person name="Berger J."/>
            <person name="Jia Z."/>
            <person name="Forss-Petter S."/>
            <person name="Watkins P.A."/>
        </authorList>
    </citation>
    <scope>FUNCTION</scope>
    <scope>SUBCELLULAR LOCATION</scope>
    <scope>DEVELOPMENTAL STAGE</scope>
    <scope>TISSUE SPECIFICITY</scope>
    <scope>CATALYTIC ACTIVITY</scope>
</reference>
<reference key="5">
    <citation type="journal article" date="2005" name="J. Biol. Chem.">
        <title>Comparative biochemical studies of the murine fatty acid transport proteins (FATP) expressed in yeast.</title>
        <authorList>
            <person name="DiRusso C.C."/>
            <person name="Li H."/>
            <person name="Darwis D."/>
            <person name="Watkins P.A."/>
            <person name="Berger J."/>
            <person name="Black P.N."/>
        </authorList>
    </citation>
    <scope>FUNCTION</scope>
    <scope>CATALYTIC ACTIVITY</scope>
    <scope>TRANSPORT ACTIVITY</scope>
</reference>
<reference key="6">
    <citation type="journal article" date="2010" name="Cell">
        <title>A tissue-specific atlas of mouse protein phosphorylation and expression.</title>
        <authorList>
            <person name="Huttlin E.L."/>
            <person name="Jedrychowski M.P."/>
            <person name="Elias J.E."/>
            <person name="Goswami T."/>
            <person name="Rad R."/>
            <person name="Beausoleil S.A."/>
            <person name="Villen J."/>
            <person name="Haas W."/>
            <person name="Sowa M.E."/>
            <person name="Gygi S.P."/>
        </authorList>
    </citation>
    <scope>IDENTIFICATION BY MASS SPECTROMETRY [LARGE SCALE ANALYSIS]</scope>
    <source>
        <tissue>Lung</tissue>
        <tissue>Testis</tissue>
    </source>
</reference>
<reference key="7">
    <citation type="journal article" date="2013" name="PLoS ONE">
        <title>Very long-chain acyl-CoA synthetase 3: overexpression and growth dependence in lung cancer.</title>
        <authorList>
            <person name="Pei Z."/>
            <person name="Fraisl P."/>
            <person name="Shi X."/>
            <person name="Gabrielson E."/>
            <person name="Forss-Petter S."/>
            <person name="Berger J."/>
            <person name="Watkins P.A."/>
        </authorList>
    </citation>
    <scope>TISSUE SPECIFICITY</scope>
</reference>
<name>S27A3_MOUSE</name>
<comment type="function">
    <text evidence="5 6">Mainly functions as an acyl-CoA ligase catalyzing the ATP-dependent formation of fatty acyl-CoA using LCFA and very-long-chain fatty acids (VLCFA) as substrates (PubMed:15469937, PubMed:15699031). Can mediate the levels of long-chain fatty acids (LCFA) in the cell by facilitating their transport across membranes (PubMed:15699031).</text>
</comment>
<comment type="catalytic activity">
    <reaction evidence="6">
        <text>a fatty acid(in) = a fatty acid(out)</text>
        <dbReference type="Rhea" id="RHEA:38879"/>
        <dbReference type="ChEBI" id="CHEBI:28868"/>
    </reaction>
</comment>
<comment type="catalytic activity">
    <reaction evidence="6">
        <text>a long-chain fatty acid + ATP + CoA = a long-chain fatty acyl-CoA + AMP + diphosphate</text>
        <dbReference type="Rhea" id="RHEA:15421"/>
        <dbReference type="ChEBI" id="CHEBI:30616"/>
        <dbReference type="ChEBI" id="CHEBI:33019"/>
        <dbReference type="ChEBI" id="CHEBI:57287"/>
        <dbReference type="ChEBI" id="CHEBI:57560"/>
        <dbReference type="ChEBI" id="CHEBI:83139"/>
        <dbReference type="ChEBI" id="CHEBI:456215"/>
        <dbReference type="EC" id="6.2.1.3"/>
    </reaction>
    <physiologicalReaction direction="left-to-right" evidence="6">
        <dbReference type="Rhea" id="RHEA:15422"/>
    </physiologicalReaction>
</comment>
<comment type="catalytic activity">
    <reaction evidence="6">
        <text>(5Z,8Z,11Z,14Z)-eicosatetraenoate + ATP + CoA = (5Z,8Z,11Z,14Z)-eicosatetraenoyl-CoA + AMP + diphosphate</text>
        <dbReference type="Rhea" id="RHEA:19713"/>
        <dbReference type="ChEBI" id="CHEBI:30616"/>
        <dbReference type="ChEBI" id="CHEBI:32395"/>
        <dbReference type="ChEBI" id="CHEBI:33019"/>
        <dbReference type="ChEBI" id="CHEBI:57287"/>
        <dbReference type="ChEBI" id="CHEBI:57368"/>
        <dbReference type="ChEBI" id="CHEBI:456215"/>
        <dbReference type="EC" id="6.2.1.15"/>
    </reaction>
    <physiologicalReaction direction="left-to-right" evidence="6">
        <dbReference type="Rhea" id="RHEA:19714"/>
    </physiologicalReaction>
</comment>
<comment type="catalytic activity">
    <reaction evidence="5">
        <text>hexadecanoate + ATP + CoA = hexadecanoyl-CoA + AMP + diphosphate</text>
        <dbReference type="Rhea" id="RHEA:30751"/>
        <dbReference type="ChEBI" id="CHEBI:7896"/>
        <dbReference type="ChEBI" id="CHEBI:30616"/>
        <dbReference type="ChEBI" id="CHEBI:33019"/>
        <dbReference type="ChEBI" id="CHEBI:57287"/>
        <dbReference type="ChEBI" id="CHEBI:57379"/>
        <dbReference type="ChEBI" id="CHEBI:456215"/>
    </reaction>
    <physiologicalReaction direction="left-to-right" evidence="5">
        <dbReference type="Rhea" id="RHEA:30752"/>
    </physiologicalReaction>
</comment>
<comment type="catalytic activity">
    <reaction evidence="1">
        <text>(9Z)-octadecenoate + ATP + CoA = (9Z)-octadecenoyl-CoA + AMP + diphosphate</text>
        <dbReference type="Rhea" id="RHEA:33607"/>
        <dbReference type="ChEBI" id="CHEBI:30616"/>
        <dbReference type="ChEBI" id="CHEBI:30823"/>
        <dbReference type="ChEBI" id="CHEBI:33019"/>
        <dbReference type="ChEBI" id="CHEBI:57287"/>
        <dbReference type="ChEBI" id="CHEBI:57387"/>
        <dbReference type="ChEBI" id="CHEBI:456215"/>
    </reaction>
    <physiologicalReaction direction="left-to-right" evidence="1">
        <dbReference type="Rhea" id="RHEA:33608"/>
    </physiologicalReaction>
</comment>
<comment type="catalytic activity">
    <reaction evidence="1">
        <text>(9Z,12Z)-octadecadienoate + ATP + CoA = (9Z,12Z)-octadecadienoyl-CoA + AMP + diphosphate</text>
        <dbReference type="Rhea" id="RHEA:33651"/>
        <dbReference type="ChEBI" id="CHEBI:30245"/>
        <dbReference type="ChEBI" id="CHEBI:30616"/>
        <dbReference type="ChEBI" id="CHEBI:33019"/>
        <dbReference type="ChEBI" id="CHEBI:57287"/>
        <dbReference type="ChEBI" id="CHEBI:57383"/>
        <dbReference type="ChEBI" id="CHEBI:456215"/>
    </reaction>
    <physiologicalReaction direction="left-to-right" evidence="1">
        <dbReference type="Rhea" id="RHEA:33652"/>
    </physiologicalReaction>
</comment>
<comment type="catalytic activity">
    <reaction evidence="5 6">
        <text>a very long-chain fatty acid + ATP + CoA = a very long-chain fatty acyl-CoA + AMP + diphosphate</text>
        <dbReference type="Rhea" id="RHEA:54536"/>
        <dbReference type="ChEBI" id="CHEBI:30616"/>
        <dbReference type="ChEBI" id="CHEBI:33019"/>
        <dbReference type="ChEBI" id="CHEBI:57287"/>
        <dbReference type="ChEBI" id="CHEBI:58950"/>
        <dbReference type="ChEBI" id="CHEBI:138261"/>
        <dbReference type="ChEBI" id="CHEBI:456215"/>
    </reaction>
    <physiologicalReaction direction="left-to-right" evidence="5 6">
        <dbReference type="Rhea" id="RHEA:54537"/>
    </physiologicalReaction>
</comment>
<comment type="catalytic activity">
    <reaction evidence="5 6">
        <text>tetracosanoate + ATP + CoA = tetracosanoyl-CoA + AMP + diphosphate</text>
        <dbReference type="Rhea" id="RHEA:33639"/>
        <dbReference type="ChEBI" id="CHEBI:30616"/>
        <dbReference type="ChEBI" id="CHEBI:31014"/>
        <dbReference type="ChEBI" id="CHEBI:33019"/>
        <dbReference type="ChEBI" id="CHEBI:57287"/>
        <dbReference type="ChEBI" id="CHEBI:65052"/>
        <dbReference type="ChEBI" id="CHEBI:456215"/>
    </reaction>
    <physiologicalReaction direction="left-to-right" evidence="5 6">
        <dbReference type="Rhea" id="RHEA:33640"/>
    </physiologicalReaction>
</comment>
<comment type="subcellular location">
    <subcellularLocation>
        <location evidence="5">Mitochondrion membrane</location>
        <topology evidence="3">Single-pass membrane protein</topology>
    </subcellularLocation>
</comment>
<comment type="alternative products">
    <event type="alternative splicing"/>
    <isoform>
        <id>O88561-1</id>
        <name>1</name>
        <sequence type="displayed"/>
    </isoform>
    <isoform>
        <id>O88561-2</id>
        <name>2</name>
        <sequence type="described" ref="VSP_016219 VSP_016220"/>
    </isoform>
</comment>
<comment type="tissue specificity">
    <text evidence="5 7">Expressed at high levels in adrenal gland, testis and ovary. Expressed at lower levels in adult brain. Found in adrenal cortical cells, spermatocytes and interstitial cells of the testis, theca cells of the ovary, cerebral cortical neurons, and cerebellar Purkinje cells (at protein level).</text>
</comment>
<comment type="developmental stage">
    <text evidence="5 7">Expressed at higher levels in embryonic brain (embryonic days 12-14) than in newborn or adult.</text>
</comment>
<comment type="similarity">
    <text evidence="12">Belongs to the ATP-dependent AMP-binding enzyme family.</text>
</comment>
<comment type="sequence caution" evidence="12">
    <conflict type="erroneous initiation">
        <sequence resource="EMBL-CDS" id="AAH60052"/>
    </conflict>
    <text>Extended N-terminus.</text>
</comment>
<comment type="sequence caution" evidence="12">
    <conflict type="erroneous initiation">
        <sequence resource="EMBL-CDS" id="BAC36120"/>
    </conflict>
    <text>Truncated N-terminus.</text>
</comment>
<gene>
    <name type="primary">Slc27a3</name>
    <name type="synonym">Acsvl3</name>
    <name type="synonym">Fatp3</name>
</gene>
<sequence>MAALLLLLPLLLLLPLLLKLDVWPQLRWLPADLAFTVRALRCKRALRARALAAAAADPESSESGCSLAWRLAYLAREQPTHTFLIHGAQRFSYAEAERESNRIARAFLRARGWTGGRRGSGRGSTEEGARVAPPAGDAAARGTTAPPLAPGATVALLLPAGPDFLWIWFGLAKAGLRTAFVPTALRRGPLLHCLRSCGASALVLATEFLESLEPDLPALRAMGLHLWATGPETNVAGISNLLSEAADQVDEPVPGYLSAPQNIMDTCLYIFTSGTTGLPKAARISHLKVLQCQGFYHLCGVHQEDVIYLALPLYHMSGSLLGIVGCLGIGATVVLKPKFSASQFWDDCQKHRVTVFQYIGELCRYLVNQPPSKAECDHKVRLAVGSGLRPDTWERFLRRFGPLQILETYGMTEGNVATFNYTGRQGAVGRASWLYKHIFPFSLIRYDVMTGEPIRNAQGHCMTTSPGEPGLLVAPVSQQSPFLGYAGAPELAKDKLLKDVFWSGDVFFNTGDLLVCDEQGFLHFHDRTGDTIRWKGENVATTEVAEVLETLDFLQEVNIYGVTVPGHEGRAGMAALALRPPQALNLVQLYSHVSENLPPYARPRFLRLQESLATTETFKQQKVRMANEGFDPSVLSDPLYVLDQDIGAYLPLTPARYSALLSGDLRI</sequence>
<feature type="chain" id="PRO_0000193208" description="Long-chain fatty acid transport protein 3" evidence="3">
    <location>
        <begin position="1"/>
        <end position="667"/>
    </location>
</feature>
<feature type="transmembrane region" description="Helical" evidence="3">
    <location>
        <begin position="3"/>
        <end position="23"/>
    </location>
</feature>
<feature type="region of interest" description="Disordered" evidence="4">
    <location>
        <begin position="114"/>
        <end position="144"/>
    </location>
</feature>
<feature type="compositionally biased region" description="Low complexity" evidence="4">
    <location>
        <begin position="130"/>
        <end position="144"/>
    </location>
</feature>
<feature type="binding site" evidence="2">
    <location>
        <begin position="272"/>
        <end position="276"/>
    </location>
    <ligand>
        <name>ATP</name>
        <dbReference type="ChEBI" id="CHEBI:30616"/>
    </ligand>
</feature>
<feature type="binding site" evidence="2">
    <location>
        <position position="315"/>
    </location>
    <ligand>
        <name>ATP</name>
        <dbReference type="ChEBI" id="CHEBI:30616"/>
    </ligand>
</feature>
<feature type="binding site" evidence="2">
    <location>
        <position position="412"/>
    </location>
    <ligand>
        <name>ATP</name>
        <dbReference type="ChEBI" id="CHEBI:30616"/>
    </ligand>
</feature>
<feature type="binding site" evidence="2">
    <location>
        <position position="512"/>
    </location>
    <ligand>
        <name>ATP</name>
        <dbReference type="ChEBI" id="CHEBI:30616"/>
    </ligand>
</feature>
<feature type="binding site" evidence="2">
    <location>
        <position position="527"/>
    </location>
    <ligand>
        <name>ATP</name>
        <dbReference type="ChEBI" id="CHEBI:30616"/>
    </ligand>
</feature>
<feature type="binding site" evidence="2">
    <location>
        <position position="619"/>
    </location>
    <ligand>
        <name>ATP</name>
        <dbReference type="ChEBI" id="CHEBI:30616"/>
    </ligand>
</feature>
<feature type="splice variant" id="VSP_016219" description="In isoform 2." evidence="9">
    <original>HIFPFSLIRYDVMTGEPIRNAQGHCMTTSPGEPGLLVAPVSQQSPFLGYAGAPELAKDKLLKDVFWSGDVFFNTGDLLVCDEQGFLHFHDRT</original>
    <variation>VRDRVDRRTPGAEGGMARAGAPGANDAVWLSLPAHLPLLLDSIRCHDRGAYSECPGALHDHISRFVLGGVQSWQTRLNLAPEVGAEPRGSGK</variation>
    <location>
        <begin position="437"/>
        <end position="528"/>
    </location>
</feature>
<feature type="splice variant" id="VSP_016220" description="In isoform 2." evidence="9">
    <location>
        <begin position="529"/>
        <end position="667"/>
    </location>
</feature>
<feature type="sequence conflict" description="In Ref. 1; AAH60052." evidence="12" ref="1">
    <location>
        <position position="302"/>
    </location>
</feature>
<feature type="sequence conflict" description="In Ref. 3; AAC40187." evidence="12" ref="3">
    <original>C</original>
    <variation>F</variation>
    <location>
        <position position="376"/>
    </location>
</feature>
<feature type="sequence conflict" description="In Ref. 2; BAC36120." evidence="12" ref="2">
    <original>I</original>
    <variation>F</variation>
    <location>
        <position position="532"/>
    </location>
</feature>
<protein>
    <recommendedName>
        <fullName evidence="11">Long-chain fatty acid transport protein 3</fullName>
        <shortName evidence="8 11">FATP-3</shortName>
        <shortName evidence="11">Fatty acid transport protein 3</shortName>
    </recommendedName>
    <alternativeName>
        <fullName evidence="10">Arachidonate--CoA ligase</fullName>
        <ecNumber evidence="6">6.2.1.15</ecNumber>
    </alternativeName>
    <alternativeName>
        <fullName>Long-chain-fatty-acid--CoA ligase</fullName>
        <ecNumber evidence="5 6">6.2.1.3</ecNumber>
    </alternativeName>
    <alternativeName>
        <fullName evidence="13">Solute carrier family 27 member 3</fullName>
    </alternativeName>
    <alternativeName>
        <fullName evidence="8">Very long-chain acyl-CoA synthetase homolog 3</fullName>
        <shortName evidence="8">VLCS-3</shortName>
        <ecNumber evidence="5 6">6.2.1.-</ecNumber>
    </alternativeName>
</protein>